<feature type="initiator methionine" description="Removed" evidence="1">
    <location>
        <position position="1"/>
    </location>
</feature>
<feature type="chain" id="PRO_0000158311" description="Histone H4">
    <location>
        <begin position="2"/>
        <end position="103"/>
    </location>
</feature>
<feature type="DNA-binding region">
    <location>
        <begin position="17"/>
        <end position="21"/>
    </location>
</feature>
<feature type="region of interest" description="Disordered" evidence="2">
    <location>
        <begin position="1"/>
        <end position="20"/>
    </location>
</feature>
<feature type="compositionally biased region" description="Gly residues" evidence="2">
    <location>
        <begin position="1"/>
        <end position="14"/>
    </location>
</feature>
<proteinExistence type="inferred from homology"/>
<dbReference type="EMBL" id="AF361948">
    <property type="protein sequence ID" value="AAM00266.1"/>
    <property type="molecule type" value="Genomic_DNA"/>
</dbReference>
<dbReference type="RefSeq" id="XP_013233172.1">
    <property type="nucleotide sequence ID" value="XM_013377718.1"/>
</dbReference>
<dbReference type="SMR" id="Q8T7J8"/>
<dbReference type="GeneID" id="25254709"/>
<dbReference type="VEuPathDB" id="ToxoDB:ETH2_1300400"/>
<dbReference type="VEuPathDB" id="ToxoDB:ETH_00028080"/>
<dbReference type="OMA" id="QKEHING"/>
<dbReference type="OrthoDB" id="10255923at2759"/>
<dbReference type="GO" id="GO:0000786">
    <property type="term" value="C:nucleosome"/>
    <property type="evidence" value="ECO:0007669"/>
    <property type="project" value="UniProtKB-KW"/>
</dbReference>
<dbReference type="GO" id="GO:0005634">
    <property type="term" value="C:nucleus"/>
    <property type="evidence" value="ECO:0007669"/>
    <property type="project" value="UniProtKB-SubCell"/>
</dbReference>
<dbReference type="GO" id="GO:0003677">
    <property type="term" value="F:DNA binding"/>
    <property type="evidence" value="ECO:0007669"/>
    <property type="project" value="UniProtKB-KW"/>
</dbReference>
<dbReference type="GO" id="GO:0046982">
    <property type="term" value="F:protein heterodimerization activity"/>
    <property type="evidence" value="ECO:0007669"/>
    <property type="project" value="InterPro"/>
</dbReference>
<dbReference type="GO" id="GO:0030527">
    <property type="term" value="F:structural constituent of chromatin"/>
    <property type="evidence" value="ECO:0007669"/>
    <property type="project" value="InterPro"/>
</dbReference>
<dbReference type="CDD" id="cd22912">
    <property type="entry name" value="HFD_H4"/>
    <property type="match status" value="1"/>
</dbReference>
<dbReference type="FunFam" id="1.10.20.10:FF:000002">
    <property type="entry name" value="Histone H4"/>
    <property type="match status" value="1"/>
</dbReference>
<dbReference type="Gene3D" id="1.10.20.10">
    <property type="entry name" value="Histone, subunit A"/>
    <property type="match status" value="1"/>
</dbReference>
<dbReference type="InterPro" id="IPR035425">
    <property type="entry name" value="CENP-T/H4_C"/>
</dbReference>
<dbReference type="InterPro" id="IPR009072">
    <property type="entry name" value="Histone-fold"/>
</dbReference>
<dbReference type="InterPro" id="IPR001951">
    <property type="entry name" value="Histone_H4"/>
</dbReference>
<dbReference type="InterPro" id="IPR019809">
    <property type="entry name" value="Histone_H4_CS"/>
</dbReference>
<dbReference type="PANTHER" id="PTHR10484">
    <property type="entry name" value="HISTONE H4"/>
    <property type="match status" value="1"/>
</dbReference>
<dbReference type="Pfam" id="PF15511">
    <property type="entry name" value="CENP-T_C"/>
    <property type="match status" value="1"/>
</dbReference>
<dbReference type="PRINTS" id="PR00623">
    <property type="entry name" value="HISTONEH4"/>
</dbReference>
<dbReference type="SMART" id="SM00417">
    <property type="entry name" value="H4"/>
    <property type="match status" value="1"/>
</dbReference>
<dbReference type="SUPFAM" id="SSF47113">
    <property type="entry name" value="Histone-fold"/>
    <property type="match status" value="1"/>
</dbReference>
<dbReference type="PROSITE" id="PS00047">
    <property type="entry name" value="HISTONE_H4"/>
    <property type="match status" value="1"/>
</dbReference>
<comment type="function">
    <text>Core component of nucleosome. Nucleosomes wrap and compact DNA into chromatin, limiting DNA accessibility to the cellular machineries which require DNA as a template. Histones thereby play a central role in transcription regulation, DNA repair, DNA replication and chromosomal stability. DNA accessibility is regulated via a complex set of post-translational modifications of histones, also called histone code, and nucleosome remodeling.</text>
</comment>
<comment type="subunit">
    <text>The nucleosome is a histone octamer containing two molecules each of H2A, H2B, H3 and H4 assembled in one H3-H4 heterotetramer and two H2A-H2B heterodimers. The octamer wraps approximately 147 bp of DNA.</text>
</comment>
<comment type="subcellular location">
    <subcellularLocation>
        <location evidence="1">Nucleus</location>
    </subcellularLocation>
    <subcellularLocation>
        <location evidence="1">Chromosome</location>
    </subcellularLocation>
</comment>
<comment type="similarity">
    <text evidence="3">Belongs to the histone H4 family.</text>
</comment>
<keyword id="KW-0158">Chromosome</keyword>
<keyword id="KW-0238">DNA-binding</keyword>
<keyword id="KW-0544">Nucleosome core</keyword>
<keyword id="KW-0539">Nucleus</keyword>
<accession>Q8T7J8</accession>
<evidence type="ECO:0000250" key="1"/>
<evidence type="ECO:0000256" key="2">
    <source>
        <dbReference type="SAM" id="MobiDB-lite"/>
    </source>
</evidence>
<evidence type="ECO:0000305" key="3"/>
<sequence length="103" mass="11439">MSGRGKGGKGLGKGGAKRHRKVLRDNIQGITKPAIRRLARRGGVKRISGLIYEEIRGVLKVFLENIIKDSVTYTEHARRKTVTAMDIVYSLKRQGRTLYGFGG</sequence>
<name>H4_EIMTE</name>
<protein>
    <recommendedName>
        <fullName>Histone H4</fullName>
    </recommendedName>
</protein>
<organism>
    <name type="scientific">Eimeria tenella</name>
    <name type="common">Coccidian parasite</name>
    <dbReference type="NCBI Taxonomy" id="5802"/>
    <lineage>
        <taxon>Eukaryota</taxon>
        <taxon>Sar</taxon>
        <taxon>Alveolata</taxon>
        <taxon>Apicomplexa</taxon>
        <taxon>Conoidasida</taxon>
        <taxon>Coccidia</taxon>
        <taxon>Eucoccidiorida</taxon>
        <taxon>Eimeriorina</taxon>
        <taxon>Eimeriidae</taxon>
        <taxon>Eimeria</taxon>
    </lineage>
</organism>
<reference key="1">
    <citation type="submission" date="2002-04" db="EMBL/GenBank/DDBJ databases">
        <title>The effect of histone deacetylase inhibitors on parasite histones.</title>
        <authorList>
            <person name="Gurnett A.M."/>
            <person name="Dulski P.M."/>
            <person name="Schmatz D.M."/>
        </authorList>
    </citation>
    <scope>NUCLEOTIDE SEQUENCE [GENOMIC DNA]</scope>
</reference>